<keyword id="KW-0025">Alternative splicing</keyword>
<keyword id="KW-0238">DNA-binding</keyword>
<keyword id="KW-0479">Metal-binding</keyword>
<keyword id="KW-1185">Reference proteome</keyword>
<keyword id="KW-0677">Repeat</keyword>
<keyword id="KW-0862">Zinc</keyword>
<keyword id="KW-0863">Zinc-finger</keyword>
<comment type="alternative products">
    <event type="alternative splicing"/>
    <isoform>
        <id>Q5ZDJ6-1</id>
        <name>1</name>
        <sequence type="displayed"/>
    </isoform>
    <isoform>
        <id>Q5ZDJ6-2</id>
        <name>2</name>
        <sequence type="described" ref="VSP_035016"/>
    </isoform>
</comment>
<comment type="miscellaneous">
    <molecule>Isoform 2</molecule>
    <text evidence="3">May be due to a competing acceptor splice site.</text>
</comment>
<name>C3H8_ORYSJ</name>
<accession>Q5ZDJ6</accession>
<accession>B7F419</accession>
<accession>Q5ZDJ7</accession>
<dbReference type="EMBL" id="AP002897">
    <property type="protein sequence ID" value="BAD61280.1"/>
    <property type="molecule type" value="Genomic_DNA"/>
</dbReference>
<dbReference type="EMBL" id="AP002897">
    <property type="protein sequence ID" value="BAD61281.1"/>
    <property type="molecule type" value="Genomic_DNA"/>
</dbReference>
<dbReference type="EMBL" id="AP008207">
    <property type="protein sequence ID" value="BAF05491.1"/>
    <property type="molecule type" value="Genomic_DNA"/>
</dbReference>
<dbReference type="EMBL" id="AP014957">
    <property type="protein sequence ID" value="BAS73169.1"/>
    <property type="molecule type" value="Genomic_DNA"/>
</dbReference>
<dbReference type="EMBL" id="AP014957">
    <property type="protein sequence ID" value="BAS73170.1"/>
    <property type="molecule type" value="Genomic_DNA"/>
</dbReference>
<dbReference type="EMBL" id="AK111682">
    <property type="protein sequence ID" value="BAG99366.1"/>
    <property type="molecule type" value="mRNA"/>
</dbReference>
<dbReference type="EMBL" id="AK112116">
    <property type="status" value="NOT_ANNOTATED_CDS"/>
    <property type="molecule type" value="mRNA"/>
</dbReference>
<dbReference type="RefSeq" id="XP_015622282.1">
    <property type="nucleotide sequence ID" value="XM_015766796.1"/>
</dbReference>
<dbReference type="RefSeq" id="XP_015622283.1">
    <property type="nucleotide sequence ID" value="XM_015766797.1"/>
</dbReference>
<dbReference type="FunCoup" id="Q5ZDJ6">
    <property type="interactions" value="2445"/>
</dbReference>
<dbReference type="STRING" id="39947.Q5ZDJ6"/>
<dbReference type="PaxDb" id="39947-Q5ZDJ6"/>
<dbReference type="EnsemblPlants" id="Os01t0616400-02">
    <molecule id="Q5ZDJ6-1"/>
    <property type="protein sequence ID" value="Os01t0616400-02"/>
    <property type="gene ID" value="Os01g0616400"/>
</dbReference>
<dbReference type="Gramene" id="Os01t0616400-02">
    <molecule id="Q5ZDJ6-1"/>
    <property type="protein sequence ID" value="Os01t0616400-02"/>
    <property type="gene ID" value="Os01g0616400"/>
</dbReference>
<dbReference type="KEGG" id="dosa:Os01g0616400"/>
<dbReference type="eggNOG" id="KOG1677">
    <property type="taxonomic scope" value="Eukaryota"/>
</dbReference>
<dbReference type="InParanoid" id="Q5ZDJ6"/>
<dbReference type="OMA" id="QPIMGSH"/>
<dbReference type="OrthoDB" id="411372at2759"/>
<dbReference type="Proteomes" id="UP000000763">
    <property type="component" value="Chromosome 1"/>
</dbReference>
<dbReference type="Proteomes" id="UP000059680">
    <property type="component" value="Chromosome 1"/>
</dbReference>
<dbReference type="ExpressionAtlas" id="Q5ZDJ6">
    <property type="expression patterns" value="baseline and differential"/>
</dbReference>
<dbReference type="GO" id="GO:0003677">
    <property type="term" value="F:DNA binding"/>
    <property type="evidence" value="ECO:0007669"/>
    <property type="project" value="UniProtKB-KW"/>
</dbReference>
<dbReference type="GO" id="GO:0003729">
    <property type="term" value="F:mRNA binding"/>
    <property type="evidence" value="ECO:0007669"/>
    <property type="project" value="UniProtKB-ARBA"/>
</dbReference>
<dbReference type="GO" id="GO:0008270">
    <property type="term" value="F:zinc ion binding"/>
    <property type="evidence" value="ECO:0007669"/>
    <property type="project" value="UniProtKB-KW"/>
</dbReference>
<dbReference type="FunFam" id="2.30.30.1190:FF:000011">
    <property type="entry name" value="cDNA clone:002-103-E06, full insert sequence"/>
    <property type="match status" value="1"/>
</dbReference>
<dbReference type="FunFam" id="2.30.30.1190:FF:000005">
    <property type="entry name" value="Zinc finger CCCH domain-containing protein 37"/>
    <property type="match status" value="1"/>
</dbReference>
<dbReference type="FunFam" id="4.10.1000.10:FF:000033">
    <property type="entry name" value="zinc finger CCCH domain-containing protein 37"/>
    <property type="match status" value="1"/>
</dbReference>
<dbReference type="Gene3D" id="2.30.30.1190">
    <property type="match status" value="4"/>
</dbReference>
<dbReference type="Gene3D" id="4.10.1000.10">
    <property type="entry name" value="Zinc finger, CCCH-type"/>
    <property type="match status" value="1"/>
</dbReference>
<dbReference type="InterPro" id="IPR050974">
    <property type="entry name" value="Plant_ZF_CCCH"/>
</dbReference>
<dbReference type="InterPro" id="IPR000571">
    <property type="entry name" value="Znf_CCCH"/>
</dbReference>
<dbReference type="InterPro" id="IPR036855">
    <property type="entry name" value="Znf_CCCH_sf"/>
</dbReference>
<dbReference type="PANTHER" id="PTHR12506">
    <property type="entry name" value="PROTEIN PHOSPHATASE RELATED"/>
    <property type="match status" value="1"/>
</dbReference>
<dbReference type="PANTHER" id="PTHR12506:SF82">
    <property type="entry name" value="ZINC FINGER CCCH DOMAIN-CONTAINING PROTEIN 64-RELATED"/>
    <property type="match status" value="1"/>
</dbReference>
<dbReference type="Pfam" id="PF00642">
    <property type="entry name" value="zf-CCCH"/>
    <property type="match status" value="6"/>
</dbReference>
<dbReference type="SMART" id="SM00356">
    <property type="entry name" value="ZnF_C3H1"/>
    <property type="match status" value="6"/>
</dbReference>
<dbReference type="SUPFAM" id="SSF90229">
    <property type="entry name" value="CCCH zinc finger"/>
    <property type="match status" value="5"/>
</dbReference>
<dbReference type="PROSITE" id="PS50103">
    <property type="entry name" value="ZF_C3H1"/>
    <property type="match status" value="6"/>
</dbReference>
<feature type="chain" id="PRO_0000346805" description="Zinc finger CCCH domain-containing protein 8">
    <location>
        <begin position="1"/>
        <end position="462"/>
    </location>
</feature>
<feature type="zinc finger region" description="C3H1-type 1" evidence="1">
    <location>
        <begin position="105"/>
        <end position="133"/>
    </location>
</feature>
<feature type="zinc finger region" description="C3H1-type 2" evidence="1">
    <location>
        <begin position="156"/>
        <end position="184"/>
    </location>
</feature>
<feature type="zinc finger region" description="C3H1-type 3" evidence="1">
    <location>
        <begin position="209"/>
        <end position="237"/>
    </location>
</feature>
<feature type="zinc finger region" description="C3H1-type 4" evidence="1">
    <location>
        <begin position="288"/>
        <end position="316"/>
    </location>
</feature>
<feature type="zinc finger region" description="C3H1-type 5" evidence="1">
    <location>
        <begin position="367"/>
        <end position="395"/>
    </location>
</feature>
<feature type="zinc finger region" description="C3H1-type 6" evidence="1">
    <location>
        <begin position="422"/>
        <end position="450"/>
    </location>
</feature>
<feature type="splice variant" id="VSP_035016" description="In isoform 2." evidence="2">
    <location>
        <position position="145"/>
    </location>
</feature>
<reference key="1">
    <citation type="journal article" date="2002" name="Nature">
        <title>The genome sequence and structure of rice chromosome 1.</title>
        <authorList>
            <person name="Sasaki T."/>
            <person name="Matsumoto T."/>
            <person name="Yamamoto K."/>
            <person name="Sakata K."/>
            <person name="Baba T."/>
            <person name="Katayose Y."/>
            <person name="Wu J."/>
            <person name="Niimura Y."/>
            <person name="Cheng Z."/>
            <person name="Nagamura Y."/>
            <person name="Antonio B.A."/>
            <person name="Kanamori H."/>
            <person name="Hosokawa S."/>
            <person name="Masukawa M."/>
            <person name="Arikawa K."/>
            <person name="Chiden Y."/>
            <person name="Hayashi M."/>
            <person name="Okamoto M."/>
            <person name="Ando T."/>
            <person name="Aoki H."/>
            <person name="Arita K."/>
            <person name="Hamada M."/>
            <person name="Harada C."/>
            <person name="Hijishita S."/>
            <person name="Honda M."/>
            <person name="Ichikawa Y."/>
            <person name="Idonuma A."/>
            <person name="Iijima M."/>
            <person name="Ikeda M."/>
            <person name="Ikeno M."/>
            <person name="Ito S."/>
            <person name="Ito T."/>
            <person name="Ito Y."/>
            <person name="Ito Y."/>
            <person name="Iwabuchi A."/>
            <person name="Kamiya K."/>
            <person name="Karasawa W."/>
            <person name="Katagiri S."/>
            <person name="Kikuta A."/>
            <person name="Kobayashi N."/>
            <person name="Kono I."/>
            <person name="Machita K."/>
            <person name="Maehara T."/>
            <person name="Mizuno H."/>
            <person name="Mizubayashi T."/>
            <person name="Mukai Y."/>
            <person name="Nagasaki H."/>
            <person name="Nakashima M."/>
            <person name="Nakama Y."/>
            <person name="Nakamichi Y."/>
            <person name="Nakamura M."/>
            <person name="Namiki N."/>
            <person name="Negishi M."/>
            <person name="Ohta I."/>
            <person name="Ono N."/>
            <person name="Saji S."/>
            <person name="Sakai K."/>
            <person name="Shibata M."/>
            <person name="Shimokawa T."/>
            <person name="Shomura A."/>
            <person name="Song J."/>
            <person name="Takazaki Y."/>
            <person name="Terasawa K."/>
            <person name="Tsuji K."/>
            <person name="Waki K."/>
            <person name="Yamagata H."/>
            <person name="Yamane H."/>
            <person name="Yoshiki S."/>
            <person name="Yoshihara R."/>
            <person name="Yukawa K."/>
            <person name="Zhong H."/>
            <person name="Iwama H."/>
            <person name="Endo T."/>
            <person name="Ito H."/>
            <person name="Hahn J.H."/>
            <person name="Kim H.-I."/>
            <person name="Eun M.-Y."/>
            <person name="Yano M."/>
            <person name="Jiang J."/>
            <person name="Gojobori T."/>
        </authorList>
    </citation>
    <scope>NUCLEOTIDE SEQUENCE [LARGE SCALE GENOMIC DNA]</scope>
    <source>
        <strain>cv. Nipponbare</strain>
    </source>
</reference>
<reference key="2">
    <citation type="journal article" date="2005" name="Nature">
        <title>The map-based sequence of the rice genome.</title>
        <authorList>
            <consortium name="International rice genome sequencing project (IRGSP)"/>
        </authorList>
    </citation>
    <scope>NUCLEOTIDE SEQUENCE [LARGE SCALE GENOMIC DNA]</scope>
    <source>
        <strain>cv. Nipponbare</strain>
    </source>
</reference>
<reference key="3">
    <citation type="journal article" date="2008" name="Nucleic Acids Res.">
        <title>The rice annotation project database (RAP-DB): 2008 update.</title>
        <authorList>
            <consortium name="The rice annotation project (RAP)"/>
        </authorList>
    </citation>
    <scope>GENOME REANNOTATION</scope>
    <source>
        <strain>cv. Nipponbare</strain>
    </source>
</reference>
<reference key="4">
    <citation type="journal article" date="2013" name="Rice">
        <title>Improvement of the Oryza sativa Nipponbare reference genome using next generation sequence and optical map data.</title>
        <authorList>
            <person name="Kawahara Y."/>
            <person name="de la Bastide M."/>
            <person name="Hamilton J.P."/>
            <person name="Kanamori H."/>
            <person name="McCombie W.R."/>
            <person name="Ouyang S."/>
            <person name="Schwartz D.C."/>
            <person name="Tanaka T."/>
            <person name="Wu J."/>
            <person name="Zhou S."/>
            <person name="Childs K.L."/>
            <person name="Davidson R.M."/>
            <person name="Lin H."/>
            <person name="Quesada-Ocampo L."/>
            <person name="Vaillancourt B."/>
            <person name="Sakai H."/>
            <person name="Lee S.S."/>
            <person name="Kim J."/>
            <person name="Numa H."/>
            <person name="Itoh T."/>
            <person name="Buell C.R."/>
            <person name="Matsumoto T."/>
        </authorList>
    </citation>
    <scope>GENOME REANNOTATION</scope>
    <source>
        <strain>cv. Nipponbare</strain>
    </source>
</reference>
<reference key="5">
    <citation type="journal article" date="2003" name="Science">
        <title>Collection, mapping, and annotation of over 28,000 cDNA clones from japonica rice.</title>
        <authorList>
            <consortium name="The rice full-length cDNA consortium"/>
        </authorList>
    </citation>
    <scope>NUCLEOTIDE SEQUENCE [LARGE SCALE MRNA] (ISOFORMS 1 AND 2)</scope>
    <source>
        <strain>cv. Nipponbare</strain>
    </source>
</reference>
<reference key="6">
    <citation type="journal article" date="2008" name="BMC Genomics">
        <title>Genome-wide analysis of CCCH zinc finger family in Arabidopsis and rice.</title>
        <authorList>
            <person name="Wang D."/>
            <person name="Guo Y."/>
            <person name="Wu C."/>
            <person name="Yang G."/>
            <person name="Li Y."/>
            <person name="Zheng C."/>
        </authorList>
    </citation>
    <scope>NOMENCLATURE</scope>
</reference>
<sequence>MSDPFYPHGHGGAAGGEGAAAAGYSSYEVDLIAARYGGRPLANPSSAAADLDARLAGARRSMGVLYHQPIMGSHSTVEQIEALYSSNTMTKRPRLESSLPIYPQRPGEKDCAFYMMTRTCKFGGSCKFDHPQWVPEGGIPNWKEQAANVEESYPEQEGEPDCPFFMKTGKCKFGSKCKFNHPKEKVNALASGNTNDKHLIADSSILPVRPSEPLCSFYAKTGKCKFRAMCKFNHPKDIEIPSSQNEPESAVTVEGETDIGSAADSVSAKMQTPVAAAQEFNSKGLPMRPGEVDCPFYMKMGSCKFGSTCRFNHPDRLVLNFPLPLGQTILPTPESMLLNSSANFMQGFDFHAAHMPVGPGPVTYPQRPGATVCDFYMKTGFCKFADRCKFHHPIDRSAPDPSANWEPAEESVQLTLAGLPRREDAVVCAFYMKTGVCKFGMQCKFDHPPPQEAIAKVSNSGS</sequence>
<proteinExistence type="evidence at transcript level"/>
<evidence type="ECO:0000255" key="1">
    <source>
        <dbReference type="PROSITE-ProRule" id="PRU00723"/>
    </source>
</evidence>
<evidence type="ECO:0000303" key="2">
    <source>
    </source>
</evidence>
<evidence type="ECO:0000305" key="3"/>
<protein>
    <recommendedName>
        <fullName>Zinc finger CCCH domain-containing protein 8</fullName>
        <shortName>OsC3H8</shortName>
    </recommendedName>
</protein>
<gene>
    <name type="ordered locus">Os01g0616400</name>
    <name type="ordered locus">LOC_Os01g42970</name>
    <name type="ORF">P0686E09.13-1</name>
    <name type="ORF">P0686E09.13-2</name>
</gene>
<organism>
    <name type="scientific">Oryza sativa subsp. japonica</name>
    <name type="common">Rice</name>
    <dbReference type="NCBI Taxonomy" id="39947"/>
    <lineage>
        <taxon>Eukaryota</taxon>
        <taxon>Viridiplantae</taxon>
        <taxon>Streptophyta</taxon>
        <taxon>Embryophyta</taxon>
        <taxon>Tracheophyta</taxon>
        <taxon>Spermatophyta</taxon>
        <taxon>Magnoliopsida</taxon>
        <taxon>Liliopsida</taxon>
        <taxon>Poales</taxon>
        <taxon>Poaceae</taxon>
        <taxon>BOP clade</taxon>
        <taxon>Oryzoideae</taxon>
        <taxon>Oryzeae</taxon>
        <taxon>Oryzinae</taxon>
        <taxon>Oryza</taxon>
        <taxon>Oryza sativa</taxon>
    </lineage>
</organism>